<sequence>MIERTFVGENVSETLIDEYFKTKLVRAGYSHIDFKKTPIGTRITVFAEKPGFVIGRKGKMVKELTETLATEYSVKNPQIEVKQVENPDLDPAVVGHKIASSLERGMHFRKTAHSAIRRVMGSGAKGVAIIVSGKLSGERSRTEKFMDGYMKHCGEPAEALVNKSHQLAKLKLGIVGVTVKIMRPDVSLPDEIVISSGEIKEVSEISEVSQE</sequence>
<accession>Q6LXE7</accession>
<organism>
    <name type="scientific">Methanococcus maripaludis (strain DSM 14266 / JCM 13030 / NBRC 101832 / S2 / LL)</name>
    <dbReference type="NCBI Taxonomy" id="267377"/>
    <lineage>
        <taxon>Archaea</taxon>
        <taxon>Methanobacteriati</taxon>
        <taxon>Methanobacteriota</taxon>
        <taxon>Methanomada group</taxon>
        <taxon>Methanococci</taxon>
        <taxon>Methanococcales</taxon>
        <taxon>Methanococcaceae</taxon>
        <taxon>Methanococcus</taxon>
    </lineage>
</organism>
<feature type="chain" id="PRO_0000130253" description="Small ribosomal subunit protein uS3">
    <location>
        <begin position="1"/>
        <end position="211"/>
    </location>
</feature>
<feature type="domain" description="KH type-2" evidence="1">
    <location>
        <begin position="16"/>
        <end position="85"/>
    </location>
</feature>
<proteinExistence type="inferred from homology"/>
<protein>
    <recommendedName>
        <fullName evidence="1">Small ribosomal subunit protein uS3</fullName>
    </recommendedName>
    <alternativeName>
        <fullName evidence="2">30S ribosomal protein S3</fullName>
    </alternativeName>
</protein>
<evidence type="ECO:0000255" key="1">
    <source>
        <dbReference type="HAMAP-Rule" id="MF_01309"/>
    </source>
</evidence>
<evidence type="ECO:0000305" key="2"/>
<comment type="function">
    <text evidence="1">Binds the lower part of the 30S subunit head.</text>
</comment>
<comment type="subunit">
    <text evidence="1">Part of the 30S ribosomal subunit.</text>
</comment>
<comment type="similarity">
    <text evidence="1">Belongs to the universal ribosomal protein uS3 family.</text>
</comment>
<gene>
    <name evidence="1" type="primary">rps3</name>
    <name type="ordered locus">MMP1404</name>
</gene>
<name>RS3_METMP</name>
<dbReference type="EMBL" id="BX950229">
    <property type="protein sequence ID" value="CAF30960.1"/>
    <property type="molecule type" value="Genomic_DNA"/>
</dbReference>
<dbReference type="RefSeq" id="WP_011171348.1">
    <property type="nucleotide sequence ID" value="NC_005791.1"/>
</dbReference>
<dbReference type="SMR" id="Q6LXE7"/>
<dbReference type="STRING" id="267377.MMP1404"/>
<dbReference type="EnsemblBacteria" id="CAF30960">
    <property type="protein sequence ID" value="CAF30960"/>
    <property type="gene ID" value="MMP1404"/>
</dbReference>
<dbReference type="KEGG" id="mmp:MMP1404"/>
<dbReference type="PATRIC" id="fig|267377.15.peg.1440"/>
<dbReference type="eggNOG" id="arCOG04097">
    <property type="taxonomic scope" value="Archaea"/>
</dbReference>
<dbReference type="HOGENOM" id="CLU_058591_1_1_2"/>
<dbReference type="OrthoDB" id="9126at2157"/>
<dbReference type="Proteomes" id="UP000000590">
    <property type="component" value="Chromosome"/>
</dbReference>
<dbReference type="GO" id="GO:0022627">
    <property type="term" value="C:cytosolic small ribosomal subunit"/>
    <property type="evidence" value="ECO:0007669"/>
    <property type="project" value="TreeGrafter"/>
</dbReference>
<dbReference type="GO" id="GO:0019843">
    <property type="term" value="F:rRNA binding"/>
    <property type="evidence" value="ECO:0007669"/>
    <property type="project" value="UniProtKB-UniRule"/>
</dbReference>
<dbReference type="GO" id="GO:0003735">
    <property type="term" value="F:structural constituent of ribosome"/>
    <property type="evidence" value="ECO:0007669"/>
    <property type="project" value="InterPro"/>
</dbReference>
<dbReference type="GO" id="GO:0006412">
    <property type="term" value="P:translation"/>
    <property type="evidence" value="ECO:0007669"/>
    <property type="project" value="UniProtKB-UniRule"/>
</dbReference>
<dbReference type="CDD" id="cd02411">
    <property type="entry name" value="KH-II_30S_S3_arch"/>
    <property type="match status" value="1"/>
</dbReference>
<dbReference type="FunFam" id="3.30.300.20:FF:000001">
    <property type="entry name" value="30S ribosomal protein S3"/>
    <property type="match status" value="1"/>
</dbReference>
<dbReference type="Gene3D" id="3.30.300.20">
    <property type="match status" value="1"/>
</dbReference>
<dbReference type="Gene3D" id="3.30.1140.32">
    <property type="entry name" value="Ribosomal protein S3, C-terminal domain"/>
    <property type="match status" value="1"/>
</dbReference>
<dbReference type="HAMAP" id="MF_01309_A">
    <property type="entry name" value="Ribosomal_uS3_A"/>
    <property type="match status" value="1"/>
</dbReference>
<dbReference type="InterPro" id="IPR004087">
    <property type="entry name" value="KH_dom"/>
</dbReference>
<dbReference type="InterPro" id="IPR015946">
    <property type="entry name" value="KH_dom-like_a/b"/>
</dbReference>
<dbReference type="InterPro" id="IPR004044">
    <property type="entry name" value="KH_dom_type_2"/>
</dbReference>
<dbReference type="InterPro" id="IPR009019">
    <property type="entry name" value="KH_sf_prok-type"/>
</dbReference>
<dbReference type="InterPro" id="IPR036419">
    <property type="entry name" value="Ribosomal_S3_C_sf"/>
</dbReference>
<dbReference type="InterPro" id="IPR027488">
    <property type="entry name" value="Ribosomal_uS3_arc"/>
</dbReference>
<dbReference type="InterPro" id="IPR001351">
    <property type="entry name" value="Ribosomal_uS3_C"/>
</dbReference>
<dbReference type="InterPro" id="IPR018280">
    <property type="entry name" value="Ribosomal_uS3_CS"/>
</dbReference>
<dbReference type="InterPro" id="IPR005703">
    <property type="entry name" value="Ribosomal_uS3_euk/arc"/>
</dbReference>
<dbReference type="NCBIfam" id="NF003219">
    <property type="entry name" value="PRK04191.1"/>
    <property type="match status" value="1"/>
</dbReference>
<dbReference type="NCBIfam" id="TIGR01008">
    <property type="entry name" value="uS3_euk_arch"/>
    <property type="match status" value="1"/>
</dbReference>
<dbReference type="PANTHER" id="PTHR11760">
    <property type="entry name" value="30S/40S RIBOSOMAL PROTEIN S3"/>
    <property type="match status" value="1"/>
</dbReference>
<dbReference type="PANTHER" id="PTHR11760:SF32">
    <property type="entry name" value="SMALL RIBOSOMAL SUBUNIT PROTEIN US3"/>
    <property type="match status" value="1"/>
</dbReference>
<dbReference type="Pfam" id="PF07650">
    <property type="entry name" value="KH_2"/>
    <property type="match status" value="1"/>
</dbReference>
<dbReference type="Pfam" id="PF00189">
    <property type="entry name" value="Ribosomal_S3_C"/>
    <property type="match status" value="1"/>
</dbReference>
<dbReference type="SMART" id="SM00322">
    <property type="entry name" value="KH"/>
    <property type="match status" value="1"/>
</dbReference>
<dbReference type="SUPFAM" id="SSF54814">
    <property type="entry name" value="Prokaryotic type KH domain (KH-domain type II)"/>
    <property type="match status" value="1"/>
</dbReference>
<dbReference type="SUPFAM" id="SSF54821">
    <property type="entry name" value="Ribosomal protein S3 C-terminal domain"/>
    <property type="match status" value="1"/>
</dbReference>
<dbReference type="PROSITE" id="PS50823">
    <property type="entry name" value="KH_TYPE_2"/>
    <property type="match status" value="1"/>
</dbReference>
<dbReference type="PROSITE" id="PS00548">
    <property type="entry name" value="RIBOSOMAL_S3"/>
    <property type="match status" value="1"/>
</dbReference>
<keyword id="KW-1185">Reference proteome</keyword>
<keyword id="KW-0687">Ribonucleoprotein</keyword>
<keyword id="KW-0689">Ribosomal protein</keyword>
<keyword id="KW-0694">RNA-binding</keyword>
<keyword id="KW-0699">rRNA-binding</keyword>
<reference key="1">
    <citation type="journal article" date="2004" name="J. Bacteriol.">
        <title>Complete genome sequence of the genetically tractable hydrogenotrophic methanogen Methanococcus maripaludis.</title>
        <authorList>
            <person name="Hendrickson E.L."/>
            <person name="Kaul R."/>
            <person name="Zhou Y."/>
            <person name="Bovee D."/>
            <person name="Chapman P."/>
            <person name="Chung J."/>
            <person name="Conway de Macario E."/>
            <person name="Dodsworth J.A."/>
            <person name="Gillett W."/>
            <person name="Graham D.E."/>
            <person name="Hackett M."/>
            <person name="Haydock A.K."/>
            <person name="Kang A."/>
            <person name="Land M.L."/>
            <person name="Levy R."/>
            <person name="Lie T.J."/>
            <person name="Major T.A."/>
            <person name="Moore B.C."/>
            <person name="Porat I."/>
            <person name="Palmeiri A."/>
            <person name="Rouse G."/>
            <person name="Saenphimmachak C."/>
            <person name="Soell D."/>
            <person name="Van Dien S."/>
            <person name="Wang T."/>
            <person name="Whitman W.B."/>
            <person name="Xia Q."/>
            <person name="Zhang Y."/>
            <person name="Larimer F.W."/>
            <person name="Olson M.V."/>
            <person name="Leigh J.A."/>
        </authorList>
    </citation>
    <scope>NUCLEOTIDE SEQUENCE [LARGE SCALE GENOMIC DNA]</scope>
    <source>
        <strain>DSM 14266 / JCM 13030 / NBRC 101832 / S2 / LL</strain>
    </source>
</reference>